<protein>
    <recommendedName>
        <fullName evidence="11">Voltage-gated delayed rectifier potassium channel KCNH8</fullName>
    </recommendedName>
    <alternativeName>
        <fullName>Ether-a-go-go-like potassium channel 3</fullName>
        <shortName evidence="10">ELK channel 3</shortName>
        <shortName evidence="10">RELK3</shortName>
    </alternativeName>
    <alternativeName>
        <fullName>Potassium voltage-gated channel subfamily H member 8</fullName>
    </alternativeName>
    <alternativeName>
        <fullName>Voltage-gated potassium channel subunit Kv12.1</fullName>
    </alternativeName>
</protein>
<comment type="function">
    <text evidence="8">Pore-forming (alpha) subunit of a voltage-gated delayed rectifier potassium channel that mediates outward-rectifying potassium currents (PubMed:9714851). Elicits a slowly activating, non-inactivating and slowly deactivation outwards potassium current at depolarizating voltages from -30 mV to +50mV (PubMed:9714851). Shows no obvious change in the activation rate from different holding potentials (PubMed:9714851). Activation is strongly dependent on the pH of the external solution (PubMed:9714851).</text>
</comment>
<comment type="catalytic activity">
    <reaction evidence="8">
        <text>K(+)(in) = K(+)(out)</text>
        <dbReference type="Rhea" id="RHEA:29463"/>
        <dbReference type="ChEBI" id="CHEBI:29103"/>
    </reaction>
</comment>
<comment type="subunit">
    <text evidence="11">The potassium channel is probably composed of a homo- or heterotetrameric complex of pore-forming alpha subunits that can associate with modulating beta subunits.</text>
</comment>
<comment type="subcellular location">
    <subcellularLocation>
        <location evidence="2">Membrane</location>
        <topology evidence="2">Multi-pass membrane protein</topology>
    </subcellularLocation>
</comment>
<comment type="tissue specificity">
    <text evidence="6 7">Detected in superior cervical, mesenteric and coeliac ganglia (PubMed:11425889). Expressed in brain (piriform cortex, olfactory tubercle, cerebral cortex, hippocampus pyramidial cells and dentate gyrus and basal ganglia of caudate/putamen and accumbens nucleus) (PubMed:11425889). Expressed in pituitary (PubMed:10718922).</text>
</comment>
<comment type="similarity">
    <text evidence="11">Belongs to the potassium channel family. H (Eag) (TC 1.A.1.20) subfamily. Kv12.1/KCNH8 sub-subfamily.</text>
</comment>
<evidence type="ECO:0000250" key="1"/>
<evidence type="ECO:0000255" key="2"/>
<evidence type="ECO:0000255" key="3">
    <source>
        <dbReference type="PROSITE-ProRule" id="PRU00060"/>
    </source>
</evidence>
<evidence type="ECO:0000255" key="4">
    <source>
        <dbReference type="PROSITE-ProRule" id="PRU00141"/>
    </source>
</evidence>
<evidence type="ECO:0000256" key="5">
    <source>
        <dbReference type="SAM" id="MobiDB-lite"/>
    </source>
</evidence>
<evidence type="ECO:0000269" key="6">
    <source>
    </source>
</evidence>
<evidence type="ECO:0000269" key="7">
    <source>
    </source>
</evidence>
<evidence type="ECO:0000269" key="8">
    <source>
    </source>
</evidence>
<evidence type="ECO:0000303" key="9">
    <source>
    </source>
</evidence>
<evidence type="ECO:0000303" key="10">
    <source>
    </source>
</evidence>
<evidence type="ECO:0000305" key="11"/>
<evidence type="ECO:0000312" key="12">
    <source>
        <dbReference type="RGD" id="2549"/>
    </source>
</evidence>
<organism>
    <name type="scientific">Rattus norvegicus</name>
    <name type="common">Rat</name>
    <dbReference type="NCBI Taxonomy" id="10116"/>
    <lineage>
        <taxon>Eukaryota</taxon>
        <taxon>Metazoa</taxon>
        <taxon>Chordata</taxon>
        <taxon>Craniata</taxon>
        <taxon>Vertebrata</taxon>
        <taxon>Euteleostomi</taxon>
        <taxon>Mammalia</taxon>
        <taxon>Eutheria</taxon>
        <taxon>Euarchontoglires</taxon>
        <taxon>Glires</taxon>
        <taxon>Rodentia</taxon>
        <taxon>Myomorpha</taxon>
        <taxon>Muroidea</taxon>
        <taxon>Muridae</taxon>
        <taxon>Murinae</taxon>
        <taxon>Rattus</taxon>
    </lineage>
</organism>
<keyword id="KW-0325">Glycoprotein</keyword>
<keyword id="KW-0407">Ion channel</keyword>
<keyword id="KW-0406">Ion transport</keyword>
<keyword id="KW-0472">Membrane</keyword>
<keyword id="KW-0630">Potassium</keyword>
<keyword id="KW-0631">Potassium channel</keyword>
<keyword id="KW-0633">Potassium transport</keyword>
<keyword id="KW-1185">Reference proteome</keyword>
<keyword id="KW-0812">Transmembrane</keyword>
<keyword id="KW-1133">Transmembrane helix</keyword>
<keyword id="KW-0813">Transport</keyword>
<keyword id="KW-0851">Voltage-gated channel</keyword>
<accession>Q9QWS8</accession>
<accession>O88877</accession>
<sequence>MPVMKGLLAPQNTFLDTIATRFDGTHSNFILANAQVAKGFPIVYCSDGFCELAGFARTEVMQKSCSCKFLFGVETNEQLMLQIEKSLEEKVEFKGEIMFYKKNGAPFWCLLDIVPIKNEKGDVVLFLASFKDITDTKVKITSEDKKEDRAKGRSRAGSHFDSARRRSRAVLYHISGHLQRREKNKLKINNNVFVDKPAFPEYKVSDAKKSKFILLHFSTFKAGWDWLILLATFYVAVTVPYNVCFIGNEDLSTTRSTTVSDIAVEILFIIDIILNFRTTYVSKSGQVIFEARSICIHYVTTWFIIDLIAALPFDLLYAFNVTVVSLVHLLKTVRLLRLLRLLQKLDRYSQHSTIVLTLLMSMFALLAHWMACIWYVIGKMEREDNSLLKWEVGWLHELGKRLESPYYGNNTLGGPSIRSAYIAALYFTLSSLTSVGFGNVSANTDAEKIFSICTMLIGALMHALVFGNVTAIIQRMYSRWSLYHTRTKDLKDFIRVHHLPQQLKQRMLEYFQTTWSVNNGIDSNELLKDFPDELRSDITMHLNKEILQLSLFECASRGCLRSLSLHIKTSFCAPGEYLLRQGDALQAIYFVCSGSMEVLKDSMVLAILGKGDLIGANLSIKDQVIKTNADVKALTYCDLQCIILKGLFEVLGLYPEYAHKFVEDIQHDLTYNLREGHESDVISRLSNKSTVPQAEPKGNGSIKKRLPSIVEDEEEEEVEEEETTSLSPIYTRGSSVSHSKKTGSSKSYLGLSLKQLTSGTVPFHSPIRVSSANSPKTKQEADPPNHGTRKEKNLKVQLCSLGTAGTPELSPRIVDGIEDGNSSEETQTFDFGSEQIRPEPRISPSLGESEIGAAFLFIKAEETKQQINKLNSEVTTLTQEVSQLGKDMRSIMQLLENILSPQQPSQFCSLHPTSICPSRESFQTRVSWSAHQPCLHLQANGAHLYHGNVTSDIWSVDPSLVGSNPQRTEAHEQSPVDSELHHSPNLAYSPSHCQVIQEGHLQFLRCISPHSDTTLTPLQSISATLSSSVCSSSETSLHLVLPSRSEEGSITHGPVSSFSLENLPGSWDREGMMSASTEPLENFPVEVVTSTADVKDSKAINV</sequence>
<feature type="chain" id="PRO_0000054020" description="Voltage-gated delayed rectifier potassium channel KCNH8">
    <location>
        <begin position="1"/>
        <end position="1102"/>
    </location>
</feature>
<feature type="topological domain" description="Cytoplasmic" evidence="2">
    <location>
        <begin position="1"/>
        <end position="225"/>
    </location>
</feature>
<feature type="transmembrane region" description="Helical; Name=Segment S1" evidence="2">
    <location>
        <begin position="226"/>
        <end position="246"/>
    </location>
</feature>
<feature type="topological domain" description="Extracellular" evidence="2">
    <location>
        <begin position="247"/>
        <end position="255"/>
    </location>
</feature>
<feature type="transmembrane region" description="Helical; Name=Segment S2" evidence="2">
    <location>
        <begin position="256"/>
        <end position="276"/>
    </location>
</feature>
<feature type="topological domain" description="Cytoplasmic" evidence="2">
    <location>
        <begin position="277"/>
        <end position="298"/>
    </location>
</feature>
<feature type="transmembrane region" description="Helical; Name=Segment S3" evidence="2">
    <location>
        <begin position="299"/>
        <end position="319"/>
    </location>
</feature>
<feature type="topological domain" description="Extracellular" evidence="2">
    <location>
        <begin position="320"/>
        <end position="327"/>
    </location>
</feature>
<feature type="transmembrane region" description="Helical; Voltage-sensor; Name=Segment S4" evidence="2">
    <location>
        <begin position="328"/>
        <end position="348"/>
    </location>
</feature>
<feature type="topological domain" description="Cytoplasmic" evidence="2">
    <location>
        <begin position="349"/>
        <end position="353"/>
    </location>
</feature>
<feature type="transmembrane region" description="Helical; Name=Segment S5" evidence="2">
    <location>
        <begin position="354"/>
        <end position="374"/>
    </location>
</feature>
<feature type="topological domain" description="Extracellular" evidence="2">
    <location>
        <begin position="375"/>
        <end position="419"/>
    </location>
</feature>
<feature type="intramembrane region" description="Pore-forming; Name=Segment H5" evidence="2">
    <location>
        <begin position="420"/>
        <end position="440"/>
    </location>
</feature>
<feature type="topological domain" description="Extracellular" evidence="2">
    <location>
        <begin position="441"/>
        <end position="448"/>
    </location>
</feature>
<feature type="transmembrane region" description="Helical; Name=Segment S6" evidence="2">
    <location>
        <begin position="449"/>
        <end position="469"/>
    </location>
</feature>
<feature type="topological domain" description="Cytoplasmic" evidence="2">
    <location>
        <begin position="470"/>
        <end position="1102"/>
    </location>
</feature>
<feature type="domain" description="PAS">
    <location>
        <begin position="18"/>
        <end position="90"/>
    </location>
</feature>
<feature type="domain" description="PAC" evidence="4">
    <location>
        <begin position="93"/>
        <end position="145"/>
    </location>
</feature>
<feature type="region of interest" description="cNMP-binding domain" evidence="3">
    <location>
        <begin position="551"/>
        <end position="668"/>
    </location>
</feature>
<feature type="region of interest" description="Disordered" evidence="5">
    <location>
        <begin position="683"/>
        <end position="744"/>
    </location>
</feature>
<feature type="region of interest" description="Disordered" evidence="5">
    <location>
        <begin position="762"/>
        <end position="793"/>
    </location>
</feature>
<feature type="region of interest" description="Disordered" evidence="5">
    <location>
        <begin position="818"/>
        <end position="845"/>
    </location>
</feature>
<feature type="region of interest" description="Disordered" evidence="5">
    <location>
        <begin position="960"/>
        <end position="983"/>
    </location>
</feature>
<feature type="short sequence motif" description="Selectivity filter" evidence="1">
    <location>
        <begin position="434"/>
        <end position="439"/>
    </location>
</feature>
<feature type="compositionally biased region" description="Acidic residues" evidence="5">
    <location>
        <begin position="710"/>
        <end position="723"/>
    </location>
</feature>
<feature type="compositionally biased region" description="Basic and acidic residues" evidence="5">
    <location>
        <begin position="777"/>
        <end position="793"/>
    </location>
</feature>
<feature type="compositionally biased region" description="Basic and acidic residues" evidence="5">
    <location>
        <begin position="968"/>
        <end position="982"/>
    </location>
</feature>
<feature type="glycosylation site" description="N-linked (GlcNAc...) asparagine" evidence="2">
    <location>
        <position position="320"/>
    </location>
</feature>
<feature type="glycosylation site" description="N-linked (GlcNAc...) asparagine" evidence="2">
    <location>
        <position position="409"/>
    </location>
</feature>
<feature type="sequence conflict" description="In Ref. 2; CAA07591." evidence="11" ref="2">
    <original>F</original>
    <variation>L</variation>
    <location>
        <position position="71"/>
    </location>
</feature>
<feature type="sequence conflict" description="In Ref. 2; CAA07591." evidence="11" ref="2">
    <original>K</original>
    <variation>N</variation>
    <location>
        <position position="187"/>
    </location>
</feature>
<feature type="sequence conflict" description="In Ref. 2; CAA07591." evidence="11" ref="2">
    <original>I</original>
    <variation>T</variation>
    <location>
        <position position="296"/>
    </location>
</feature>
<feature type="sequence conflict" description="In Ref. 2; CAA07591." evidence="11" ref="2">
    <original>M</original>
    <variation>I</variation>
    <location>
        <position position="370"/>
    </location>
</feature>
<gene>
    <name evidence="12" type="primary">Kcnh8</name>
    <name evidence="9" type="synonym">Elk1</name>
    <name evidence="10" type="synonym">Elk3</name>
</gene>
<reference key="1">
    <citation type="journal article" date="1998" name="J. Physiol. (Lond.)">
        <title>Cloning of a mammalian elk potassium channel gene and EAG mRNA distribution in rat sympathetic ganglia.</title>
        <authorList>
            <person name="Shi W."/>
            <person name="Wang H.-S."/>
            <person name="Pan Z."/>
            <person name="Wymore R.S."/>
            <person name="Cohen I.S."/>
            <person name="McKinnon D."/>
            <person name="Dixon J.E."/>
        </authorList>
    </citation>
    <scope>NUCLEOTIDE SEQUENCE [MRNA]</scope>
    <scope>FUNCTION</scope>
    <scope>TRANSPORTER ACTIVITY</scope>
</reference>
<reference key="2">
    <citation type="journal article" date="1998" name="J. Physiol. (Lond.)">
        <title>Cloning and functional expression of rat ether-a-go-go-like K+ channel genes.</title>
        <authorList>
            <person name="Engeland B."/>
            <person name="Neu A."/>
            <person name="Ludwig J."/>
            <person name="Roeper J."/>
            <person name="Pongs O."/>
        </authorList>
    </citation>
    <scope>NUCLEOTIDE SEQUENCE [MRNA] OF 9-379</scope>
    <source>
        <tissue>Brain cortex</tissue>
    </source>
</reference>
<reference key="3">
    <citation type="journal article" date="2000" name="J. Neuroendocrinol.">
        <title>Expression of mRNA for voltage-dependent and inward-rectifying K channels in GH3/B6 cells and rat pituitary.</title>
        <authorList>
            <person name="Wulfsen I."/>
            <person name="Hauber H.-P."/>
            <person name="Schiemann D."/>
            <person name="Bauer C.K."/>
            <person name="Schwarz J.R."/>
        </authorList>
    </citation>
    <scope>TISSUE SPECIFICITY</scope>
</reference>
<reference key="4">
    <citation type="journal article" date="2001" name="J. Neurosci.">
        <title>Differential expression of genes encoding subthreshold-operating voltage-gated K+ channels in brain.</title>
        <authorList>
            <person name="Saganich M.J."/>
            <person name="Machado E."/>
            <person name="Rudy B."/>
        </authorList>
    </citation>
    <scope>TISSUE SPECIFICITY</scope>
</reference>
<proteinExistence type="evidence at transcript level"/>
<name>KCNH8_RAT</name>
<dbReference type="EMBL" id="AF061957">
    <property type="protein sequence ID" value="AAC61520.1"/>
    <property type="molecule type" value="mRNA"/>
</dbReference>
<dbReference type="EMBL" id="AJ007632">
    <property type="protein sequence ID" value="CAA07591.1"/>
    <property type="molecule type" value="mRNA"/>
</dbReference>
<dbReference type="PIR" id="T17367">
    <property type="entry name" value="T17367"/>
</dbReference>
<dbReference type="RefSeq" id="NP_659563.1">
    <property type="nucleotide sequence ID" value="NM_145095.2"/>
</dbReference>
<dbReference type="SMR" id="Q9QWS8"/>
<dbReference type="FunCoup" id="Q9QWS8">
    <property type="interactions" value="690"/>
</dbReference>
<dbReference type="STRING" id="10116.ENSRNOP00000074122"/>
<dbReference type="BindingDB" id="Q9QWS8"/>
<dbReference type="GlyCosmos" id="Q9QWS8">
    <property type="glycosylation" value="2 sites, No reported glycans"/>
</dbReference>
<dbReference type="GlyGen" id="Q9QWS8">
    <property type="glycosylation" value="3 sites"/>
</dbReference>
<dbReference type="PhosphoSitePlus" id="Q9QWS8"/>
<dbReference type="PaxDb" id="10116-ENSRNOP00000017246"/>
<dbReference type="GeneID" id="246325"/>
<dbReference type="KEGG" id="rno:246325"/>
<dbReference type="AGR" id="RGD:2549"/>
<dbReference type="CTD" id="131096"/>
<dbReference type="RGD" id="2549">
    <property type="gene designation" value="Kcnh8"/>
</dbReference>
<dbReference type="eggNOG" id="KOG0498">
    <property type="taxonomic scope" value="Eukaryota"/>
</dbReference>
<dbReference type="InParanoid" id="Q9QWS8"/>
<dbReference type="OrthoDB" id="49176at9989"/>
<dbReference type="PhylomeDB" id="Q9QWS8"/>
<dbReference type="Reactome" id="R-RNO-1296072">
    <property type="pathway name" value="Voltage gated Potassium channels"/>
</dbReference>
<dbReference type="PRO" id="PR:Q9QWS8"/>
<dbReference type="Proteomes" id="UP000002494">
    <property type="component" value="Unplaced"/>
</dbReference>
<dbReference type="GO" id="GO:0034702">
    <property type="term" value="C:monoatomic ion channel complex"/>
    <property type="evidence" value="ECO:0007669"/>
    <property type="project" value="UniProtKB-KW"/>
</dbReference>
<dbReference type="GO" id="GO:0005886">
    <property type="term" value="C:plasma membrane"/>
    <property type="evidence" value="ECO:0000318"/>
    <property type="project" value="GO_Central"/>
</dbReference>
<dbReference type="GO" id="GO:0005251">
    <property type="term" value="F:delayed rectifier potassium channel activity"/>
    <property type="evidence" value="ECO:0000314"/>
    <property type="project" value="UniProtKB"/>
</dbReference>
<dbReference type="GO" id="GO:0000978">
    <property type="term" value="F:RNA polymerase II cis-regulatory region sequence-specific DNA binding"/>
    <property type="evidence" value="ECO:0000315"/>
    <property type="project" value="RGD"/>
</dbReference>
<dbReference type="GO" id="GO:0005249">
    <property type="term" value="F:voltage-gated potassium channel activity"/>
    <property type="evidence" value="ECO:0000315"/>
    <property type="project" value="RGD"/>
</dbReference>
<dbReference type="GO" id="GO:0043066">
    <property type="term" value="P:negative regulation of apoptotic process"/>
    <property type="evidence" value="ECO:0000315"/>
    <property type="project" value="RGD"/>
</dbReference>
<dbReference type="GO" id="GO:0071805">
    <property type="term" value="P:potassium ion transmembrane transport"/>
    <property type="evidence" value="ECO:0000318"/>
    <property type="project" value="GO_Central"/>
</dbReference>
<dbReference type="GO" id="GO:0006813">
    <property type="term" value="P:potassium ion transport"/>
    <property type="evidence" value="ECO:0000314"/>
    <property type="project" value="UniProtKB"/>
</dbReference>
<dbReference type="GO" id="GO:0042391">
    <property type="term" value="P:regulation of membrane potential"/>
    <property type="evidence" value="ECO:0000318"/>
    <property type="project" value="GO_Central"/>
</dbReference>
<dbReference type="GO" id="GO:1904044">
    <property type="term" value="P:response to aldosterone"/>
    <property type="evidence" value="ECO:0000270"/>
    <property type="project" value="RGD"/>
</dbReference>
<dbReference type="CDD" id="cd00038">
    <property type="entry name" value="CAP_ED"/>
    <property type="match status" value="1"/>
</dbReference>
<dbReference type="CDD" id="cd00130">
    <property type="entry name" value="PAS"/>
    <property type="match status" value="1"/>
</dbReference>
<dbReference type="FunFam" id="1.10.1200.260:FF:000002">
    <property type="entry name" value="Potassium voltage-gated channel subfamily H member 8"/>
    <property type="match status" value="1"/>
</dbReference>
<dbReference type="FunFam" id="3.30.450.20:FF:000118">
    <property type="entry name" value="Potassium voltage-gated channel subfamily H member 8"/>
    <property type="match status" value="1"/>
</dbReference>
<dbReference type="FunFam" id="2.60.120.10:FF:000014">
    <property type="entry name" value="Potassium voltage-gated channel, subfamily H (Eag-related), member 4"/>
    <property type="match status" value="1"/>
</dbReference>
<dbReference type="Gene3D" id="1.10.1200.260">
    <property type="match status" value="1"/>
</dbReference>
<dbReference type="Gene3D" id="1.10.287.70">
    <property type="match status" value="1"/>
</dbReference>
<dbReference type="Gene3D" id="2.60.120.10">
    <property type="entry name" value="Jelly Rolls"/>
    <property type="match status" value="1"/>
</dbReference>
<dbReference type="Gene3D" id="3.30.450.20">
    <property type="entry name" value="PAS domain"/>
    <property type="match status" value="1"/>
</dbReference>
<dbReference type="InterPro" id="IPR000595">
    <property type="entry name" value="cNMP-bd_dom"/>
</dbReference>
<dbReference type="InterPro" id="IPR018490">
    <property type="entry name" value="cNMP-bd_dom_sf"/>
</dbReference>
<dbReference type="InterPro" id="IPR005821">
    <property type="entry name" value="Ion_trans_dom"/>
</dbReference>
<dbReference type="InterPro" id="IPR003938">
    <property type="entry name" value="K_chnl_volt-dep_EAG/ELK/ERG"/>
</dbReference>
<dbReference type="InterPro" id="IPR003950">
    <property type="entry name" value="K_chnl_volt-dep_ELK"/>
</dbReference>
<dbReference type="InterPro" id="IPR050818">
    <property type="entry name" value="KCNH_animal-type"/>
</dbReference>
<dbReference type="InterPro" id="IPR001610">
    <property type="entry name" value="PAC"/>
</dbReference>
<dbReference type="InterPro" id="IPR000014">
    <property type="entry name" value="PAS"/>
</dbReference>
<dbReference type="InterPro" id="IPR000700">
    <property type="entry name" value="PAS-assoc_C"/>
</dbReference>
<dbReference type="InterPro" id="IPR035965">
    <property type="entry name" value="PAS-like_dom_sf"/>
</dbReference>
<dbReference type="InterPro" id="IPR014710">
    <property type="entry name" value="RmlC-like_jellyroll"/>
</dbReference>
<dbReference type="NCBIfam" id="TIGR00229">
    <property type="entry name" value="sensory_box"/>
    <property type="match status" value="1"/>
</dbReference>
<dbReference type="PANTHER" id="PTHR10217:SF380">
    <property type="entry name" value="POTASSIUM VOLTAGE-GATED CHANNEL SUBFAMILY H MEMBER 8"/>
    <property type="match status" value="1"/>
</dbReference>
<dbReference type="PANTHER" id="PTHR10217">
    <property type="entry name" value="VOLTAGE AND LIGAND GATED POTASSIUM CHANNEL"/>
    <property type="match status" value="1"/>
</dbReference>
<dbReference type="Pfam" id="PF00027">
    <property type="entry name" value="cNMP_binding"/>
    <property type="match status" value="1"/>
</dbReference>
<dbReference type="Pfam" id="PF00520">
    <property type="entry name" value="Ion_trans"/>
    <property type="match status" value="1"/>
</dbReference>
<dbReference type="Pfam" id="PF13426">
    <property type="entry name" value="PAS_9"/>
    <property type="match status" value="1"/>
</dbReference>
<dbReference type="PRINTS" id="PR01463">
    <property type="entry name" value="EAGCHANLFMLY"/>
</dbReference>
<dbReference type="PRINTS" id="PR01465">
    <property type="entry name" value="ELKCHANNEL"/>
</dbReference>
<dbReference type="SMART" id="SM00100">
    <property type="entry name" value="cNMP"/>
    <property type="match status" value="1"/>
</dbReference>
<dbReference type="SMART" id="SM00086">
    <property type="entry name" value="PAC"/>
    <property type="match status" value="1"/>
</dbReference>
<dbReference type="SUPFAM" id="SSF51206">
    <property type="entry name" value="cAMP-binding domain-like"/>
    <property type="match status" value="1"/>
</dbReference>
<dbReference type="SUPFAM" id="SSF55785">
    <property type="entry name" value="PYP-like sensor domain (PAS domain)"/>
    <property type="match status" value="1"/>
</dbReference>
<dbReference type="SUPFAM" id="SSF81324">
    <property type="entry name" value="Voltage-gated potassium channels"/>
    <property type="match status" value="1"/>
</dbReference>
<dbReference type="PROSITE" id="PS50042">
    <property type="entry name" value="CNMP_BINDING_3"/>
    <property type="match status" value="1"/>
</dbReference>
<dbReference type="PROSITE" id="PS50113">
    <property type="entry name" value="PAC"/>
    <property type="match status" value="1"/>
</dbReference>